<accession>A4FW46</accession>
<name>CBIA_METM5</name>
<reference key="1">
    <citation type="submission" date="2007-03" db="EMBL/GenBank/DDBJ databases">
        <title>Complete sequence of chromosome of Methanococcus maripaludis C5.</title>
        <authorList>
            <consortium name="US DOE Joint Genome Institute"/>
            <person name="Copeland A."/>
            <person name="Lucas S."/>
            <person name="Lapidus A."/>
            <person name="Barry K."/>
            <person name="Glavina del Rio T."/>
            <person name="Dalin E."/>
            <person name="Tice H."/>
            <person name="Pitluck S."/>
            <person name="Chertkov O."/>
            <person name="Brettin T."/>
            <person name="Bruce D."/>
            <person name="Han C."/>
            <person name="Detter J.C."/>
            <person name="Schmutz J."/>
            <person name="Larimer F."/>
            <person name="Land M."/>
            <person name="Hauser L."/>
            <person name="Kyrpides N."/>
            <person name="Mikhailova N."/>
            <person name="Sieprawska-Lupa M."/>
            <person name="Whitman W.B."/>
            <person name="Richardson P."/>
        </authorList>
    </citation>
    <scope>NUCLEOTIDE SEQUENCE [LARGE SCALE GENOMIC DNA]</scope>
    <source>
        <strain>C5 / ATCC BAA-1333</strain>
    </source>
</reference>
<sequence length="447" mass="50199">MKRVVIAGTSSMVGKTTISTGIMKALSKKNNVQPYKIGPDYIDPTYHTEATKNKSRNLDSFFMDEMQVRSIFKRHSKNKDINVIEGVRGLYEGISPYNDVGSTASVSKTLNAPVILLMDARSLTRSAAAIIKGFKSFDTELNIKGVIFNKIRGEGHLNKLKEAVKYYDNDIEIIGAIPRDDGLSVSQRHLGLVPTPENKQKLLERIDLWGNTVEECLDIEKIVELSDESFDFEVDEKNKEETLWKVEKNNSKIAVAFDESFNFYYWDNFDALEENGAKIKFFSPLNDVEVPDCDTIYLGGGYPELFSEKLSNNKSMIDSIRNFDGKIYGECGGLMYLTNSIDGKEMLKLIDADAVMTPNVQGLSYVKGTFEKDCIIGEKSKEFKAHEFHYSKLININENDFSYRINRGKGIINSMDGITSKDGDIVGGYAHQHCIGNPYFAANLSKT</sequence>
<protein>
    <recommendedName>
        <fullName evidence="1">Cobyrinate a,c-diamide synthase</fullName>
        <ecNumber evidence="1">6.3.5.11</ecNumber>
    </recommendedName>
    <alternativeName>
        <fullName evidence="1">Cobyrinic acid a,c-diamide synthetase</fullName>
    </alternativeName>
    <alternativeName>
        <fullName evidence="1">Ni-sirohydrochlorin a,c-diamide synthase</fullName>
        <ecNumber evidence="1">6.3.5.12</ecNumber>
    </alternativeName>
    <alternativeName>
        <fullName evidence="1">Ni-sirohydrochlorin a,c-diamide synthetase</fullName>
    </alternativeName>
</protein>
<proteinExistence type="inferred from homology"/>
<dbReference type="EC" id="6.3.5.11" evidence="1"/>
<dbReference type="EC" id="6.3.5.12" evidence="1"/>
<dbReference type="EMBL" id="CP000609">
    <property type="protein sequence ID" value="ABO34417.1"/>
    <property type="molecule type" value="Genomic_DNA"/>
</dbReference>
<dbReference type="RefSeq" id="WP_011867878.1">
    <property type="nucleotide sequence ID" value="NC_009135.1"/>
</dbReference>
<dbReference type="SMR" id="A4FW46"/>
<dbReference type="STRING" id="402880.MmarC5_0100"/>
<dbReference type="GeneID" id="4927520"/>
<dbReference type="KEGG" id="mmq:MmarC5_0100"/>
<dbReference type="eggNOG" id="arCOG00106">
    <property type="taxonomic scope" value="Archaea"/>
</dbReference>
<dbReference type="HOGENOM" id="CLU_022752_2_0_2"/>
<dbReference type="OrthoDB" id="8896at2157"/>
<dbReference type="UniPathway" id="UPA00148">
    <property type="reaction ID" value="UER00231"/>
</dbReference>
<dbReference type="Proteomes" id="UP000000253">
    <property type="component" value="Chromosome"/>
</dbReference>
<dbReference type="GO" id="GO:0005524">
    <property type="term" value="F:ATP binding"/>
    <property type="evidence" value="ECO:0007669"/>
    <property type="project" value="UniProtKB-UniRule"/>
</dbReference>
<dbReference type="GO" id="GO:0042242">
    <property type="term" value="F:cobyrinic acid a,c-diamide synthase activity"/>
    <property type="evidence" value="ECO:0007669"/>
    <property type="project" value="UniProtKB-UniRule"/>
</dbReference>
<dbReference type="GO" id="GO:0009236">
    <property type="term" value="P:cobalamin biosynthetic process"/>
    <property type="evidence" value="ECO:0007669"/>
    <property type="project" value="UniProtKB-UniRule"/>
</dbReference>
<dbReference type="GO" id="GO:0015948">
    <property type="term" value="P:methanogenesis"/>
    <property type="evidence" value="ECO:0007669"/>
    <property type="project" value="UniProtKB-KW"/>
</dbReference>
<dbReference type="CDD" id="cd05388">
    <property type="entry name" value="CobB_N"/>
    <property type="match status" value="1"/>
</dbReference>
<dbReference type="CDD" id="cd03130">
    <property type="entry name" value="GATase1_CobB"/>
    <property type="match status" value="1"/>
</dbReference>
<dbReference type="Gene3D" id="3.40.50.880">
    <property type="match status" value="1"/>
</dbReference>
<dbReference type="Gene3D" id="3.40.50.300">
    <property type="entry name" value="P-loop containing nucleotide triphosphate hydrolases"/>
    <property type="match status" value="1"/>
</dbReference>
<dbReference type="HAMAP" id="MF_00027">
    <property type="entry name" value="CobB_CbiA"/>
    <property type="match status" value="1"/>
</dbReference>
<dbReference type="InterPro" id="IPR004484">
    <property type="entry name" value="CbiA/CobB_synth"/>
</dbReference>
<dbReference type="InterPro" id="IPR029062">
    <property type="entry name" value="Class_I_gatase-like"/>
</dbReference>
<dbReference type="InterPro" id="IPR002586">
    <property type="entry name" value="CobQ/CobB/MinD/ParA_Nub-bd_dom"/>
</dbReference>
<dbReference type="InterPro" id="IPR011698">
    <property type="entry name" value="GATase_3"/>
</dbReference>
<dbReference type="InterPro" id="IPR027417">
    <property type="entry name" value="P-loop_NTPase"/>
</dbReference>
<dbReference type="NCBIfam" id="TIGR00379">
    <property type="entry name" value="cobB"/>
    <property type="match status" value="1"/>
</dbReference>
<dbReference type="NCBIfam" id="NF033195">
    <property type="entry name" value="F430_CfbB"/>
    <property type="match status" value="1"/>
</dbReference>
<dbReference type="NCBIfam" id="NF002204">
    <property type="entry name" value="PRK01077.1"/>
    <property type="match status" value="1"/>
</dbReference>
<dbReference type="PANTHER" id="PTHR43873">
    <property type="entry name" value="COBYRINATE A,C-DIAMIDE SYNTHASE"/>
    <property type="match status" value="1"/>
</dbReference>
<dbReference type="PANTHER" id="PTHR43873:SF1">
    <property type="entry name" value="COBYRINATE A,C-DIAMIDE SYNTHASE"/>
    <property type="match status" value="1"/>
</dbReference>
<dbReference type="Pfam" id="PF01656">
    <property type="entry name" value="CbiA"/>
    <property type="match status" value="1"/>
</dbReference>
<dbReference type="Pfam" id="PF07685">
    <property type="entry name" value="GATase_3"/>
    <property type="match status" value="1"/>
</dbReference>
<dbReference type="SUPFAM" id="SSF52317">
    <property type="entry name" value="Class I glutamine amidotransferase-like"/>
    <property type="match status" value="1"/>
</dbReference>
<dbReference type="SUPFAM" id="SSF52540">
    <property type="entry name" value="P-loop containing nucleoside triphosphate hydrolases"/>
    <property type="match status" value="1"/>
</dbReference>
<dbReference type="PROSITE" id="PS51274">
    <property type="entry name" value="GATASE_COBBQ"/>
    <property type="match status" value="1"/>
</dbReference>
<gene>
    <name evidence="1" type="primary">cbiA</name>
    <name evidence="1" type="synonym">cfbB</name>
    <name type="ordered locus">MmarC5_0100</name>
</gene>
<feature type="chain" id="PRO_1000074390" description="Cobyrinate a,c-diamide synthase">
    <location>
        <begin position="1"/>
        <end position="447"/>
    </location>
</feature>
<feature type="domain" description="GATase cobBQ-type" evidence="1">
    <location>
        <begin position="252"/>
        <end position="439"/>
    </location>
</feature>
<feature type="active site" description="Nucleophile" evidence="1">
    <location>
        <position position="331"/>
    </location>
</feature>
<feature type="site" description="Increases nucleophilicity of active site Cys" evidence="1">
    <location>
        <position position="431"/>
    </location>
</feature>
<keyword id="KW-0067">ATP-binding</keyword>
<keyword id="KW-0169">Cobalamin biosynthesis</keyword>
<keyword id="KW-0315">Glutamine amidotransferase</keyword>
<keyword id="KW-0436">Ligase</keyword>
<keyword id="KW-0460">Magnesium</keyword>
<keyword id="KW-0484">Methanogenesis</keyword>
<keyword id="KW-0547">Nucleotide-binding</keyword>
<comment type="function">
    <text evidence="1">Catalyzes the ATP-dependent amidation of the two carboxylate groups at positions a and c of cobyrinate, using either L-glutamine or ammonia as the nitrogen source. Involved in the biosynthesis of the unique nickel-containing tetrapyrrole coenzyme F430, the prosthetic group of methyl-coenzyme M reductase (MCR), which plays a key role in methanogenesis and anaerobic methane oxidation. Catalyzes the ATP-dependent amidation of the two carboxylate groups at positions a and c of Ni-sirohydrochlorin, using L-glutamine or ammonia as the nitrogen source.</text>
</comment>
<comment type="catalytic activity">
    <reaction evidence="1">
        <text>cob(II)yrinate + 2 L-glutamine + 2 ATP + 2 H2O = cob(II)yrinate a,c diamide + 2 L-glutamate + 2 ADP + 2 phosphate + 2 H(+)</text>
        <dbReference type="Rhea" id="RHEA:26289"/>
        <dbReference type="ChEBI" id="CHEBI:15377"/>
        <dbReference type="ChEBI" id="CHEBI:15378"/>
        <dbReference type="ChEBI" id="CHEBI:29985"/>
        <dbReference type="ChEBI" id="CHEBI:30616"/>
        <dbReference type="ChEBI" id="CHEBI:43474"/>
        <dbReference type="ChEBI" id="CHEBI:58359"/>
        <dbReference type="ChEBI" id="CHEBI:58537"/>
        <dbReference type="ChEBI" id="CHEBI:58894"/>
        <dbReference type="ChEBI" id="CHEBI:456216"/>
        <dbReference type="EC" id="6.3.5.11"/>
    </reaction>
</comment>
<comment type="catalytic activity">
    <reaction evidence="1">
        <text>Ni-sirohydrochlorin + 2 L-glutamine + 2 ATP + 2 H2O = Ni-sirohydrochlorin a,c-diamide + 2 L-glutamate + 2 ADP + 2 phosphate + 2 H(+)</text>
        <dbReference type="Rhea" id="RHEA:52896"/>
        <dbReference type="ChEBI" id="CHEBI:15377"/>
        <dbReference type="ChEBI" id="CHEBI:15378"/>
        <dbReference type="ChEBI" id="CHEBI:29985"/>
        <dbReference type="ChEBI" id="CHEBI:30616"/>
        <dbReference type="ChEBI" id="CHEBI:43474"/>
        <dbReference type="ChEBI" id="CHEBI:58359"/>
        <dbReference type="ChEBI" id="CHEBI:136841"/>
        <dbReference type="ChEBI" id="CHEBI:136887"/>
        <dbReference type="ChEBI" id="CHEBI:456216"/>
        <dbReference type="EC" id="6.3.5.12"/>
    </reaction>
</comment>
<comment type="cofactor">
    <cofactor evidence="1">
        <name>Mg(2+)</name>
        <dbReference type="ChEBI" id="CHEBI:18420"/>
    </cofactor>
</comment>
<comment type="pathway">
    <text evidence="1">Cofactor biosynthesis; adenosylcobalamin biosynthesis; cob(II)yrinate a,c-diamide from sirohydrochlorin (anaerobic route): step 10/10.</text>
</comment>
<comment type="domain">
    <text evidence="1">Comprises of two domains. The C-terminal domain contains the binding site for glutamine and catalyzes the hydrolysis of this substrate to glutamate and ammonia. The N-terminal domain is anticipated to bind ATP, and cobyrinate or Ni-sirohydrochlorin, and catalyzes the ultimate synthesis of the diamide product. The ammonia produced via the glutaminase domain is probably translocated to the adjacent domain via a molecular tunnel, where it reacts with an activated intermediate.</text>
</comment>
<comment type="miscellaneous">
    <text evidence="1">The a and c carboxylates of cobyrinate and Ni-sirohydrochlorin are activated for nucleophilic attack via formation of a phosphorylated intermediate by ATP. CbiA catalyzes first the amidation of the c-carboxylate, and then that of the a-carboxylate.</text>
</comment>
<comment type="similarity">
    <text evidence="1">Belongs to the CobB/CbiA family.</text>
</comment>
<organism>
    <name type="scientific">Methanococcus maripaludis (strain C5 / ATCC BAA-1333)</name>
    <dbReference type="NCBI Taxonomy" id="402880"/>
    <lineage>
        <taxon>Archaea</taxon>
        <taxon>Methanobacteriati</taxon>
        <taxon>Methanobacteriota</taxon>
        <taxon>Methanomada group</taxon>
        <taxon>Methanococci</taxon>
        <taxon>Methanococcales</taxon>
        <taxon>Methanococcaceae</taxon>
        <taxon>Methanococcus</taxon>
    </lineage>
</organism>
<evidence type="ECO:0000255" key="1">
    <source>
        <dbReference type="HAMAP-Rule" id="MF_00027"/>
    </source>
</evidence>